<name>SYFA_THEAC</name>
<proteinExistence type="inferred from homology"/>
<accession>P57693</accession>
<sequence>MHIPIPMVQISEAEYRVLRAIQSRGATAIESELSVEGLSDREIASAISWLEVKGLLDVERREIKTYALSSEGKRYLREGLPELVLYRKLKERGEMTMDEIRDLMPDTYRIALAQLAKFGITPKEGKLIYRNSGIEAAIEERQRFLQSMDPKNTAMIDHFRHRSGVIDEKIRTERIVRLNDSAYEAIAEFGGEGLIGSLDPSIIASGEWKTKNFRKYDLNSPSSVIRSSLKHPMTYLIEEIREIFLNMGFTEMGGHYIESTLWDMDSLFIPQDHPARDMQDTFYVEADSFDIDHPEISKKIRKIHEKGFDGYSGWGYRWSDAEARKLVLRTHTTVSTARYLYENNEPPQAIFSVEKVFRHESVDWKHLAEFYQIEGAVYSKDVSVSTLKWILRDFYAKLGFNDIKLIPSYYPYTEPSLDVVVRVNGKEVELGGSGLFRPEVLKILGLKAPVMAWGMGLERLAMMYYGLTDVRDLYNTDFEFLSSFRFNISRNGRNNYGKA</sequence>
<keyword id="KW-0030">Aminoacyl-tRNA synthetase</keyword>
<keyword id="KW-0067">ATP-binding</keyword>
<keyword id="KW-0963">Cytoplasm</keyword>
<keyword id="KW-0436">Ligase</keyword>
<keyword id="KW-0460">Magnesium</keyword>
<keyword id="KW-0479">Metal-binding</keyword>
<keyword id="KW-0547">Nucleotide-binding</keyword>
<keyword id="KW-0648">Protein biosynthesis</keyword>
<keyword id="KW-1185">Reference proteome</keyword>
<feature type="chain" id="PRO_0000126822" description="Phenylalanine--tRNA ligase alpha subunit">
    <location>
        <begin position="1"/>
        <end position="499"/>
    </location>
</feature>
<feature type="binding site" evidence="1">
    <location>
        <position position="333"/>
    </location>
    <ligand>
        <name>L-phenylalanine</name>
        <dbReference type="ChEBI" id="CHEBI:58095"/>
    </ligand>
</feature>
<feature type="binding site" evidence="1">
    <location>
        <begin position="372"/>
        <end position="374"/>
    </location>
    <ligand>
        <name>L-phenylalanine</name>
        <dbReference type="ChEBI" id="CHEBI:58095"/>
    </ligand>
</feature>
<feature type="binding site" evidence="1">
    <location>
        <position position="412"/>
    </location>
    <ligand>
        <name>L-phenylalanine</name>
        <dbReference type="ChEBI" id="CHEBI:58095"/>
    </ligand>
</feature>
<feature type="binding site" evidence="1">
    <location>
        <position position="414"/>
    </location>
    <ligand>
        <name>Mg(2+)</name>
        <dbReference type="ChEBI" id="CHEBI:18420"/>
        <note>shared with beta subunit</note>
    </ligand>
</feature>
<feature type="binding site" evidence="1">
    <location>
        <position position="436"/>
    </location>
    <ligand>
        <name>L-phenylalanine</name>
        <dbReference type="ChEBI" id="CHEBI:58095"/>
    </ligand>
</feature>
<organism>
    <name type="scientific">Thermoplasma acidophilum (strain ATCC 25905 / DSM 1728 / JCM 9062 / NBRC 15155 / AMRC-C165)</name>
    <dbReference type="NCBI Taxonomy" id="273075"/>
    <lineage>
        <taxon>Archaea</taxon>
        <taxon>Methanobacteriati</taxon>
        <taxon>Thermoplasmatota</taxon>
        <taxon>Thermoplasmata</taxon>
        <taxon>Thermoplasmatales</taxon>
        <taxon>Thermoplasmataceae</taxon>
        <taxon>Thermoplasma</taxon>
    </lineage>
</organism>
<comment type="catalytic activity">
    <reaction evidence="1">
        <text>tRNA(Phe) + L-phenylalanine + ATP = L-phenylalanyl-tRNA(Phe) + AMP + diphosphate + H(+)</text>
        <dbReference type="Rhea" id="RHEA:19413"/>
        <dbReference type="Rhea" id="RHEA-COMP:9668"/>
        <dbReference type="Rhea" id="RHEA-COMP:9699"/>
        <dbReference type="ChEBI" id="CHEBI:15378"/>
        <dbReference type="ChEBI" id="CHEBI:30616"/>
        <dbReference type="ChEBI" id="CHEBI:33019"/>
        <dbReference type="ChEBI" id="CHEBI:58095"/>
        <dbReference type="ChEBI" id="CHEBI:78442"/>
        <dbReference type="ChEBI" id="CHEBI:78531"/>
        <dbReference type="ChEBI" id="CHEBI:456215"/>
        <dbReference type="EC" id="6.1.1.20"/>
    </reaction>
</comment>
<comment type="cofactor">
    <cofactor evidence="1">
        <name>Mg(2+)</name>
        <dbReference type="ChEBI" id="CHEBI:18420"/>
    </cofactor>
    <text evidence="1">Binds 2 magnesium ions per tetramer.</text>
</comment>
<comment type="subunit">
    <text evidence="1">Tetramer of two alpha and two beta subunits.</text>
</comment>
<comment type="subcellular location">
    <subcellularLocation>
        <location evidence="1">Cytoplasm</location>
    </subcellularLocation>
</comment>
<comment type="similarity">
    <text evidence="1">Belongs to the class-II aminoacyl-tRNA synthetase family. Phe-tRNA synthetase alpha subunit type 2 subfamily.</text>
</comment>
<reference key="1">
    <citation type="journal article" date="2000" name="Nature">
        <title>The genome sequence of the thermoacidophilic scavenger Thermoplasma acidophilum.</title>
        <authorList>
            <person name="Ruepp A."/>
            <person name="Graml W."/>
            <person name="Santos-Martinez M.-L."/>
            <person name="Koretke K.K."/>
            <person name="Volker C."/>
            <person name="Mewes H.-W."/>
            <person name="Frishman D."/>
            <person name="Stocker S."/>
            <person name="Lupas A.N."/>
            <person name="Baumeister W."/>
        </authorList>
    </citation>
    <scope>NUCLEOTIDE SEQUENCE [LARGE SCALE GENOMIC DNA]</scope>
    <source>
        <strain>ATCC 25905 / DSM 1728 / JCM 9062 / NBRC 15155 / AMRC-C165</strain>
    </source>
</reference>
<dbReference type="EC" id="6.1.1.20" evidence="1"/>
<dbReference type="EMBL" id="AL445064">
    <property type="protein sequence ID" value="CAC11777.1"/>
    <property type="molecule type" value="Genomic_DNA"/>
</dbReference>
<dbReference type="SMR" id="P57693"/>
<dbReference type="FunCoup" id="P57693">
    <property type="interactions" value="246"/>
</dbReference>
<dbReference type="STRING" id="273075.gene:9571859"/>
<dbReference type="PaxDb" id="273075-Ta0639"/>
<dbReference type="EnsemblBacteria" id="CAC11777">
    <property type="protein sequence ID" value="CAC11777"/>
    <property type="gene ID" value="CAC11777"/>
</dbReference>
<dbReference type="KEGG" id="tac:Ta0639"/>
<dbReference type="eggNOG" id="arCOG00410">
    <property type="taxonomic scope" value="Archaea"/>
</dbReference>
<dbReference type="HOGENOM" id="CLU_025086_2_2_2"/>
<dbReference type="InParanoid" id="P57693"/>
<dbReference type="OrthoDB" id="372178at2157"/>
<dbReference type="Proteomes" id="UP000001024">
    <property type="component" value="Chromosome"/>
</dbReference>
<dbReference type="GO" id="GO:0005737">
    <property type="term" value="C:cytoplasm"/>
    <property type="evidence" value="ECO:0007669"/>
    <property type="project" value="UniProtKB-SubCell"/>
</dbReference>
<dbReference type="GO" id="GO:0005524">
    <property type="term" value="F:ATP binding"/>
    <property type="evidence" value="ECO:0007669"/>
    <property type="project" value="UniProtKB-UniRule"/>
</dbReference>
<dbReference type="GO" id="GO:0000287">
    <property type="term" value="F:magnesium ion binding"/>
    <property type="evidence" value="ECO:0007669"/>
    <property type="project" value="UniProtKB-UniRule"/>
</dbReference>
<dbReference type="GO" id="GO:0004826">
    <property type="term" value="F:phenylalanine-tRNA ligase activity"/>
    <property type="evidence" value="ECO:0007669"/>
    <property type="project" value="UniProtKB-UniRule"/>
</dbReference>
<dbReference type="GO" id="GO:0000049">
    <property type="term" value="F:tRNA binding"/>
    <property type="evidence" value="ECO:0007669"/>
    <property type="project" value="InterPro"/>
</dbReference>
<dbReference type="GO" id="GO:0006432">
    <property type="term" value="P:phenylalanyl-tRNA aminoacylation"/>
    <property type="evidence" value="ECO:0007669"/>
    <property type="project" value="UniProtKB-UniRule"/>
</dbReference>
<dbReference type="CDD" id="cd00496">
    <property type="entry name" value="PheRS_alpha_core"/>
    <property type="match status" value="1"/>
</dbReference>
<dbReference type="Gene3D" id="3.30.930.10">
    <property type="entry name" value="Bira Bifunctional Protein, Domain 2"/>
    <property type="match status" value="1"/>
</dbReference>
<dbReference type="HAMAP" id="MF_00282">
    <property type="entry name" value="Phe_tRNA_synth_alpha2"/>
    <property type="match status" value="1"/>
</dbReference>
<dbReference type="InterPro" id="IPR006195">
    <property type="entry name" value="aa-tRNA-synth_II"/>
</dbReference>
<dbReference type="InterPro" id="IPR045864">
    <property type="entry name" value="aa-tRNA-synth_II/BPL/LPL"/>
</dbReference>
<dbReference type="InterPro" id="IPR004529">
    <property type="entry name" value="Phe-tRNA-synth_IIc_asu"/>
</dbReference>
<dbReference type="InterPro" id="IPR022917">
    <property type="entry name" value="Phe_tRNA_ligase_alpha_bac/arc"/>
</dbReference>
<dbReference type="InterPro" id="IPR002319">
    <property type="entry name" value="Phenylalanyl-tRNA_Synthase"/>
</dbReference>
<dbReference type="NCBIfam" id="TIGR00468">
    <property type="entry name" value="pheS"/>
    <property type="match status" value="1"/>
</dbReference>
<dbReference type="NCBIfam" id="NF003210">
    <property type="entry name" value="PRK04172.1"/>
    <property type="match status" value="1"/>
</dbReference>
<dbReference type="PANTHER" id="PTHR11538:SF40">
    <property type="entry name" value="PHENYLALANINE--TRNA LIGASE ALPHA SUBUNIT"/>
    <property type="match status" value="1"/>
</dbReference>
<dbReference type="PANTHER" id="PTHR11538">
    <property type="entry name" value="PHENYLALANYL-TRNA SYNTHETASE"/>
    <property type="match status" value="1"/>
</dbReference>
<dbReference type="Pfam" id="PF01409">
    <property type="entry name" value="tRNA-synt_2d"/>
    <property type="match status" value="1"/>
</dbReference>
<dbReference type="SUPFAM" id="SSF55681">
    <property type="entry name" value="Class II aaRS and biotin synthetases"/>
    <property type="match status" value="1"/>
</dbReference>
<dbReference type="PROSITE" id="PS50862">
    <property type="entry name" value="AA_TRNA_LIGASE_II"/>
    <property type="match status" value="1"/>
</dbReference>
<gene>
    <name evidence="1" type="primary">pheS</name>
    <name type="ordered locus">Ta0639</name>
</gene>
<evidence type="ECO:0000255" key="1">
    <source>
        <dbReference type="HAMAP-Rule" id="MF_00282"/>
    </source>
</evidence>
<protein>
    <recommendedName>
        <fullName evidence="1">Phenylalanine--tRNA ligase alpha subunit</fullName>
        <ecNumber evidence="1">6.1.1.20</ecNumber>
    </recommendedName>
    <alternativeName>
        <fullName evidence="1">Phenylalanyl-tRNA synthetase alpha subunit</fullName>
        <shortName evidence="1">PheRS</shortName>
    </alternativeName>
</protein>